<comment type="function">
    <text evidence="1">Catalyzes the ATP-dependent conversion of 7-carboxy-7-deazaguanine (CDG) to 7-cyano-7-deazaguanine (preQ(0)).</text>
</comment>
<comment type="catalytic activity">
    <reaction evidence="1">
        <text>7-carboxy-7-deazaguanine + NH4(+) + ATP = 7-cyano-7-deazaguanine + ADP + phosphate + H2O + H(+)</text>
        <dbReference type="Rhea" id="RHEA:27982"/>
        <dbReference type="ChEBI" id="CHEBI:15377"/>
        <dbReference type="ChEBI" id="CHEBI:15378"/>
        <dbReference type="ChEBI" id="CHEBI:28938"/>
        <dbReference type="ChEBI" id="CHEBI:30616"/>
        <dbReference type="ChEBI" id="CHEBI:43474"/>
        <dbReference type="ChEBI" id="CHEBI:45075"/>
        <dbReference type="ChEBI" id="CHEBI:61036"/>
        <dbReference type="ChEBI" id="CHEBI:456216"/>
        <dbReference type="EC" id="6.3.4.20"/>
    </reaction>
</comment>
<comment type="cofactor">
    <cofactor evidence="1">
        <name>Zn(2+)</name>
        <dbReference type="ChEBI" id="CHEBI:29105"/>
    </cofactor>
    <text evidence="1">Binds 1 zinc ion per subunit.</text>
</comment>
<comment type="pathway">
    <text evidence="1">Purine metabolism; 7-cyano-7-deazaguanine biosynthesis.</text>
</comment>
<comment type="similarity">
    <text evidence="1">Belongs to the QueC family.</text>
</comment>
<proteinExistence type="inferred from homology"/>
<gene>
    <name evidence="1" type="primary">queC</name>
    <name type="ordered locus">C8J_0015</name>
</gene>
<sequence>MSKKALCIISGGMDSTLCAYLAKKEGYEIIALHFDYEQRTQEKERECFKQICKALKVEKSYILDVSFIKDIGGNALTDKSIDIPKNELCISDTPPITYVPFRNGIFLSIAGSLAEKENCESIFIGVVEEDGSGYPDCTDEFIQKAQEFINEGTSKNFKVYIKTPLVRLNKAKIVELALKENVPLELTWSCYESEDEACGECDSCLLRLRGFEKVGFKDKIKYKS</sequence>
<feature type="chain" id="PRO_0000315386" description="7-cyano-7-deazaguanine synthase">
    <location>
        <begin position="1"/>
        <end position="224"/>
    </location>
</feature>
<feature type="binding site" evidence="1">
    <location>
        <begin position="9"/>
        <end position="19"/>
    </location>
    <ligand>
        <name>ATP</name>
        <dbReference type="ChEBI" id="CHEBI:30616"/>
    </ligand>
</feature>
<feature type="binding site" evidence="1">
    <location>
        <position position="190"/>
    </location>
    <ligand>
        <name>Zn(2+)</name>
        <dbReference type="ChEBI" id="CHEBI:29105"/>
    </ligand>
</feature>
<feature type="binding site" evidence="1">
    <location>
        <position position="198"/>
    </location>
    <ligand>
        <name>Zn(2+)</name>
        <dbReference type="ChEBI" id="CHEBI:29105"/>
    </ligand>
</feature>
<feature type="binding site" evidence="1">
    <location>
        <position position="201"/>
    </location>
    <ligand>
        <name>Zn(2+)</name>
        <dbReference type="ChEBI" id="CHEBI:29105"/>
    </ligand>
</feature>
<feature type="binding site" evidence="1">
    <location>
        <position position="204"/>
    </location>
    <ligand>
        <name>Zn(2+)</name>
        <dbReference type="ChEBI" id="CHEBI:29105"/>
    </ligand>
</feature>
<feature type="sequence conflict" description="In Ref. 1; ABA77541." evidence="2" ref="1">
    <original>Q</original>
    <variation>P</variation>
    <location>
        <position position="38"/>
    </location>
</feature>
<reference key="1">
    <citation type="submission" date="2005-09" db="EMBL/GenBank/DDBJ databases">
        <title>Isolation of a gene that is involved in Campylobacter jejuni 81116 cytotoxin production.</title>
        <authorList>
            <person name="Liu K."/>
            <person name="Fry B.N."/>
            <person name="Coloe P.J."/>
        </authorList>
    </citation>
    <scope>NUCLEOTIDE SEQUENCE [GENOMIC DNA]</scope>
</reference>
<reference key="2">
    <citation type="journal article" date="2007" name="J. Bacteriol.">
        <title>The complete genome sequence of Campylobacter jejuni strain 81116 (NCTC11828).</title>
        <authorList>
            <person name="Pearson B.M."/>
            <person name="Gaskin D.J.H."/>
            <person name="Segers R.P.A.M."/>
            <person name="Wells J.M."/>
            <person name="Nuijten P.J.M."/>
            <person name="van Vliet A.H.M."/>
        </authorList>
    </citation>
    <scope>NUCLEOTIDE SEQUENCE [LARGE SCALE GENOMIC DNA]</scope>
    <source>
        <strain>81116 / NCTC 11828</strain>
    </source>
</reference>
<dbReference type="EC" id="6.3.4.20" evidence="1"/>
<dbReference type="EMBL" id="DQ202384">
    <property type="protein sequence ID" value="ABA77541.1"/>
    <property type="molecule type" value="Genomic_DNA"/>
</dbReference>
<dbReference type="EMBL" id="CP000814">
    <property type="protein sequence ID" value="ABV51616.1"/>
    <property type="molecule type" value="Genomic_DNA"/>
</dbReference>
<dbReference type="RefSeq" id="WP_002866793.1">
    <property type="nucleotide sequence ID" value="NC_009839.1"/>
</dbReference>
<dbReference type="SMR" id="A8FJH9"/>
<dbReference type="KEGG" id="cju:C8J_0015"/>
<dbReference type="HOGENOM" id="CLU_081854_1_0_7"/>
<dbReference type="UniPathway" id="UPA00391"/>
<dbReference type="GO" id="GO:0005524">
    <property type="term" value="F:ATP binding"/>
    <property type="evidence" value="ECO:0007669"/>
    <property type="project" value="UniProtKB-UniRule"/>
</dbReference>
<dbReference type="GO" id="GO:0016879">
    <property type="term" value="F:ligase activity, forming carbon-nitrogen bonds"/>
    <property type="evidence" value="ECO:0007669"/>
    <property type="project" value="UniProtKB-UniRule"/>
</dbReference>
<dbReference type="GO" id="GO:0008270">
    <property type="term" value="F:zinc ion binding"/>
    <property type="evidence" value="ECO:0007669"/>
    <property type="project" value="UniProtKB-UniRule"/>
</dbReference>
<dbReference type="GO" id="GO:0008616">
    <property type="term" value="P:queuosine biosynthetic process"/>
    <property type="evidence" value="ECO:0007669"/>
    <property type="project" value="UniProtKB-UniRule"/>
</dbReference>
<dbReference type="CDD" id="cd01995">
    <property type="entry name" value="QueC-like"/>
    <property type="match status" value="1"/>
</dbReference>
<dbReference type="Gene3D" id="3.40.50.620">
    <property type="entry name" value="HUPs"/>
    <property type="match status" value="1"/>
</dbReference>
<dbReference type="HAMAP" id="MF_01633">
    <property type="entry name" value="QueC"/>
    <property type="match status" value="1"/>
</dbReference>
<dbReference type="InterPro" id="IPR018317">
    <property type="entry name" value="QueC"/>
</dbReference>
<dbReference type="InterPro" id="IPR014729">
    <property type="entry name" value="Rossmann-like_a/b/a_fold"/>
</dbReference>
<dbReference type="NCBIfam" id="TIGR00364">
    <property type="entry name" value="7-cyano-7-deazaguanine synthase QueC"/>
    <property type="match status" value="1"/>
</dbReference>
<dbReference type="PANTHER" id="PTHR42914">
    <property type="entry name" value="7-CYANO-7-DEAZAGUANINE SYNTHASE"/>
    <property type="match status" value="1"/>
</dbReference>
<dbReference type="PANTHER" id="PTHR42914:SF1">
    <property type="entry name" value="7-CYANO-7-DEAZAGUANINE SYNTHASE"/>
    <property type="match status" value="1"/>
</dbReference>
<dbReference type="Pfam" id="PF06508">
    <property type="entry name" value="QueC"/>
    <property type="match status" value="1"/>
</dbReference>
<dbReference type="PIRSF" id="PIRSF006293">
    <property type="entry name" value="ExsB"/>
    <property type="match status" value="1"/>
</dbReference>
<dbReference type="SUPFAM" id="SSF52402">
    <property type="entry name" value="Adenine nucleotide alpha hydrolases-like"/>
    <property type="match status" value="1"/>
</dbReference>
<protein>
    <recommendedName>
        <fullName evidence="1">7-cyano-7-deazaguanine synthase</fullName>
        <ecNumber evidence="1">6.3.4.20</ecNumber>
    </recommendedName>
    <alternativeName>
        <fullName evidence="1">7-cyano-7-carbaguanine synthase</fullName>
    </alternativeName>
    <alternativeName>
        <fullName evidence="1">PreQ(0) synthase</fullName>
    </alternativeName>
    <alternativeName>
        <fullName evidence="1">Queuosine biosynthesis protein QueC</fullName>
    </alternativeName>
</protein>
<accession>A8FJH9</accession>
<accession>Q0PCA9</accession>
<accession>Q3HR23</accession>
<accession>Q9PJ95</accession>
<keyword id="KW-0067">ATP-binding</keyword>
<keyword id="KW-0436">Ligase</keyword>
<keyword id="KW-0479">Metal-binding</keyword>
<keyword id="KW-0547">Nucleotide-binding</keyword>
<keyword id="KW-0671">Queuosine biosynthesis</keyword>
<keyword id="KW-0862">Zinc</keyword>
<name>QUEC_CAMJ8</name>
<organism>
    <name type="scientific">Campylobacter jejuni subsp. jejuni serotype O:6 (strain 81116 / NCTC 11828)</name>
    <dbReference type="NCBI Taxonomy" id="407148"/>
    <lineage>
        <taxon>Bacteria</taxon>
        <taxon>Pseudomonadati</taxon>
        <taxon>Campylobacterota</taxon>
        <taxon>Epsilonproteobacteria</taxon>
        <taxon>Campylobacterales</taxon>
        <taxon>Campylobacteraceae</taxon>
        <taxon>Campylobacter</taxon>
    </lineage>
</organism>
<evidence type="ECO:0000255" key="1">
    <source>
        <dbReference type="HAMAP-Rule" id="MF_01633"/>
    </source>
</evidence>
<evidence type="ECO:0000305" key="2"/>